<accession>P0CL99</accession>
<accession>Q55HG8</accession>
<accession>Q5K706</accession>
<organism>
    <name type="scientific">Cryptococcus neoformans var. neoformans serotype D (strain B-3501A)</name>
    <name type="common">Filobasidiella neoformans</name>
    <dbReference type="NCBI Taxonomy" id="283643"/>
    <lineage>
        <taxon>Eukaryota</taxon>
        <taxon>Fungi</taxon>
        <taxon>Dikarya</taxon>
        <taxon>Basidiomycota</taxon>
        <taxon>Agaricomycotina</taxon>
        <taxon>Tremellomycetes</taxon>
        <taxon>Tremellales</taxon>
        <taxon>Cryptococcaceae</taxon>
        <taxon>Cryptococcus</taxon>
        <taxon>Cryptococcus neoformans species complex</taxon>
    </lineage>
</organism>
<dbReference type="EC" id="2.7.2.1" evidence="1"/>
<dbReference type="EMBL" id="AAEY01000066">
    <property type="protein sequence ID" value="EAL17325.1"/>
    <property type="molecule type" value="Genomic_DNA"/>
</dbReference>
<dbReference type="RefSeq" id="XP_771972.1">
    <property type="nucleotide sequence ID" value="XM_766879.1"/>
</dbReference>
<dbReference type="SMR" id="P0CL99"/>
<dbReference type="EnsemblFungi" id="AAW47117">
    <property type="protein sequence ID" value="AAW47117"/>
    <property type="gene ID" value="CNN01560"/>
</dbReference>
<dbReference type="GeneID" id="4939763"/>
<dbReference type="KEGG" id="cnb:CNBN1520"/>
<dbReference type="VEuPathDB" id="FungiDB:CNBN1520"/>
<dbReference type="HOGENOM" id="CLU_020352_1_0_1"/>
<dbReference type="OrthoDB" id="1824at5206"/>
<dbReference type="UniPathway" id="UPA00340">
    <property type="reaction ID" value="UER00458"/>
</dbReference>
<dbReference type="GO" id="GO:0008776">
    <property type="term" value="F:acetate kinase activity"/>
    <property type="evidence" value="ECO:0007669"/>
    <property type="project" value="UniProtKB-UniRule"/>
</dbReference>
<dbReference type="GO" id="GO:0005524">
    <property type="term" value="F:ATP binding"/>
    <property type="evidence" value="ECO:0007669"/>
    <property type="project" value="UniProtKB-KW"/>
</dbReference>
<dbReference type="GO" id="GO:0000287">
    <property type="term" value="F:magnesium ion binding"/>
    <property type="evidence" value="ECO:0007669"/>
    <property type="project" value="UniProtKB-UniRule"/>
</dbReference>
<dbReference type="GO" id="GO:0006083">
    <property type="term" value="P:acetate metabolic process"/>
    <property type="evidence" value="ECO:0007669"/>
    <property type="project" value="TreeGrafter"/>
</dbReference>
<dbReference type="GO" id="GO:0006085">
    <property type="term" value="P:acetyl-CoA biosynthetic process"/>
    <property type="evidence" value="ECO:0007669"/>
    <property type="project" value="UniProtKB-UniRule"/>
</dbReference>
<dbReference type="Gene3D" id="3.30.420.40">
    <property type="match status" value="2"/>
</dbReference>
<dbReference type="HAMAP" id="MF_00020">
    <property type="entry name" value="Acetate_kinase"/>
    <property type="match status" value="1"/>
</dbReference>
<dbReference type="InterPro" id="IPR004372">
    <property type="entry name" value="Ac/propionate_kinase"/>
</dbReference>
<dbReference type="InterPro" id="IPR000890">
    <property type="entry name" value="Aliphatic_acid_kin_short-chain"/>
</dbReference>
<dbReference type="InterPro" id="IPR023865">
    <property type="entry name" value="Aliphatic_acid_kinase_CS"/>
</dbReference>
<dbReference type="InterPro" id="IPR043129">
    <property type="entry name" value="ATPase_NBD"/>
</dbReference>
<dbReference type="NCBIfam" id="TIGR00016">
    <property type="entry name" value="ackA"/>
    <property type="match status" value="1"/>
</dbReference>
<dbReference type="PANTHER" id="PTHR21060">
    <property type="entry name" value="ACETATE KINASE"/>
    <property type="match status" value="1"/>
</dbReference>
<dbReference type="PANTHER" id="PTHR21060:SF15">
    <property type="entry name" value="ACETATE KINASE-RELATED"/>
    <property type="match status" value="1"/>
</dbReference>
<dbReference type="Pfam" id="PF00871">
    <property type="entry name" value="Acetate_kinase"/>
    <property type="match status" value="1"/>
</dbReference>
<dbReference type="PIRSF" id="PIRSF000722">
    <property type="entry name" value="Acetate_prop_kin"/>
    <property type="match status" value="1"/>
</dbReference>
<dbReference type="PRINTS" id="PR00471">
    <property type="entry name" value="ACETATEKNASE"/>
</dbReference>
<dbReference type="SUPFAM" id="SSF53067">
    <property type="entry name" value="Actin-like ATPase domain"/>
    <property type="match status" value="2"/>
</dbReference>
<dbReference type="PROSITE" id="PS01075">
    <property type="entry name" value="ACETATE_KINASE_1"/>
    <property type="match status" value="1"/>
</dbReference>
<gene>
    <name type="ordered locus">CNBN1520</name>
</gene>
<proteinExistence type="inferred from homology"/>
<comment type="catalytic activity">
    <reaction evidence="1">
        <text>acetate + ATP = acetyl phosphate + ADP</text>
        <dbReference type="Rhea" id="RHEA:11352"/>
        <dbReference type="ChEBI" id="CHEBI:22191"/>
        <dbReference type="ChEBI" id="CHEBI:30089"/>
        <dbReference type="ChEBI" id="CHEBI:30616"/>
        <dbReference type="ChEBI" id="CHEBI:456216"/>
        <dbReference type="EC" id="2.7.2.1"/>
    </reaction>
</comment>
<comment type="cofactor">
    <cofactor evidence="1">
        <name>Mg(2+)</name>
        <dbReference type="ChEBI" id="CHEBI:18420"/>
    </cofactor>
</comment>
<comment type="pathway">
    <text evidence="1">Metabolic intermediate biosynthesis; acetyl-CoA biosynthesis; acetyl-CoA from acetate: step 1/2.</text>
</comment>
<comment type="similarity">
    <text evidence="1">Belongs to the acetokinase family.</text>
</comment>
<sequence length="430" mass="46972">MPDKTEYLLAINCGSSSIKGKLFAIPSFELLANLAVTNISSADERVKIRITWEEGKGKNSEEEADYGDKIRYASLVPILLDHLTNSTHVEKEEIKYVCHRVVHGGTHDRGIRVVKGHEEGLIEMDKLSEFAPLHNHRAVLAVKSCLDALPHHTSLLLFDTIFHQTIAPEVYTYALPPSDNELSMPLRKYGFHGLSYASIVRSLAEHLKKPSDQVNVVVAHLGSGSSSCCIKNGKSVDTSMGLTPLEGLLGGTRSGTIDPTAIFHHTKDAASDANVGDFTVSKAEIILNKNSGLKALAGTTNFGHIIQNLDPSKCSKEDHEKAKLTYAVFLDRLLNFVAQYLFKLLSEVPIESIDGLVFSGGIGEKGAELRRDVLKKLAWLGAEVDEEANNSNSGGTVKCITKEGSKLKGWVVETDEEGWMATMAKEEFGF</sequence>
<protein>
    <recommendedName>
        <fullName evidence="1">Probable acetate kinase</fullName>
        <ecNumber evidence="1">2.7.2.1</ecNumber>
    </recommendedName>
    <alternativeName>
        <fullName evidence="1">Acetokinase</fullName>
    </alternativeName>
</protein>
<name>ACKA_CRYNB</name>
<keyword id="KW-0067">ATP-binding</keyword>
<keyword id="KW-0418">Kinase</keyword>
<keyword id="KW-0460">Magnesium</keyword>
<keyword id="KW-0479">Metal-binding</keyword>
<keyword id="KW-0547">Nucleotide-binding</keyword>
<keyword id="KW-0808">Transferase</keyword>
<feature type="chain" id="PRO_0000410000" description="Probable acetate kinase">
    <location>
        <begin position="1"/>
        <end position="430"/>
    </location>
</feature>
<feature type="active site" description="Proton donor/acceptor" evidence="1">
    <location>
        <position position="159"/>
    </location>
</feature>
<feature type="binding site" evidence="1">
    <location>
        <position position="12"/>
    </location>
    <ligand>
        <name>Mg(2+)</name>
        <dbReference type="ChEBI" id="CHEBI:18420"/>
    </ligand>
</feature>
<feature type="binding site" evidence="1">
    <location>
        <position position="19"/>
    </location>
    <ligand>
        <name>ATP</name>
        <dbReference type="ChEBI" id="CHEBI:30616"/>
    </ligand>
</feature>
<feature type="binding site" evidence="1">
    <location>
        <position position="100"/>
    </location>
    <ligand>
        <name>substrate</name>
    </ligand>
</feature>
<feature type="binding site" evidence="1">
    <location>
        <begin position="220"/>
        <end position="224"/>
    </location>
    <ligand>
        <name>ATP</name>
        <dbReference type="ChEBI" id="CHEBI:30616"/>
    </ligand>
</feature>
<feature type="binding site" evidence="1">
    <location>
        <position position="416"/>
    </location>
    <ligand>
        <name>Mg(2+)</name>
        <dbReference type="ChEBI" id="CHEBI:18420"/>
    </ligand>
</feature>
<feature type="site" description="Transition state stabilizer" evidence="1">
    <location>
        <position position="192"/>
    </location>
</feature>
<feature type="site" description="Transition state stabilizer" evidence="1">
    <location>
        <position position="253"/>
    </location>
</feature>
<reference key="1">
    <citation type="journal article" date="2005" name="Science">
        <title>The genome of the basidiomycetous yeast and human pathogen Cryptococcus neoformans.</title>
        <authorList>
            <person name="Loftus B.J."/>
            <person name="Fung E."/>
            <person name="Roncaglia P."/>
            <person name="Rowley D."/>
            <person name="Amedeo P."/>
            <person name="Bruno D."/>
            <person name="Vamathevan J."/>
            <person name="Miranda M."/>
            <person name="Anderson I.J."/>
            <person name="Fraser J.A."/>
            <person name="Allen J.E."/>
            <person name="Bosdet I.E."/>
            <person name="Brent M.R."/>
            <person name="Chiu R."/>
            <person name="Doering T.L."/>
            <person name="Donlin M.J."/>
            <person name="D'Souza C.A."/>
            <person name="Fox D.S."/>
            <person name="Grinberg V."/>
            <person name="Fu J."/>
            <person name="Fukushima M."/>
            <person name="Haas B.J."/>
            <person name="Huang J.C."/>
            <person name="Janbon G."/>
            <person name="Jones S.J.M."/>
            <person name="Koo H.L."/>
            <person name="Krzywinski M.I."/>
            <person name="Kwon-Chung K.J."/>
            <person name="Lengeler K.B."/>
            <person name="Maiti R."/>
            <person name="Marra M.A."/>
            <person name="Marra R.E."/>
            <person name="Mathewson C.A."/>
            <person name="Mitchell T.G."/>
            <person name="Pertea M."/>
            <person name="Riggs F.R."/>
            <person name="Salzberg S.L."/>
            <person name="Schein J.E."/>
            <person name="Shvartsbeyn A."/>
            <person name="Shin H."/>
            <person name="Shumway M."/>
            <person name="Specht C.A."/>
            <person name="Suh B.B."/>
            <person name="Tenney A."/>
            <person name="Utterback T.R."/>
            <person name="Wickes B.L."/>
            <person name="Wortman J.R."/>
            <person name="Wye N.H."/>
            <person name="Kronstad J.W."/>
            <person name="Lodge J.K."/>
            <person name="Heitman J."/>
            <person name="Davis R.W."/>
            <person name="Fraser C.M."/>
            <person name="Hyman R.W."/>
        </authorList>
    </citation>
    <scope>NUCLEOTIDE SEQUENCE [LARGE SCALE GENOMIC DNA]</scope>
    <source>
        <strain>B-3501A</strain>
    </source>
</reference>
<evidence type="ECO:0000255" key="1">
    <source>
        <dbReference type="HAMAP-Rule" id="MF_03131"/>
    </source>
</evidence>